<reference key="1">
    <citation type="submission" date="2007-06" db="EMBL/GenBank/DDBJ databases">
        <title>Complete sequence of Methanococcus vannielii SB.</title>
        <authorList>
            <consortium name="US DOE Joint Genome Institute"/>
            <person name="Copeland A."/>
            <person name="Lucas S."/>
            <person name="Lapidus A."/>
            <person name="Barry K."/>
            <person name="Glavina del Rio T."/>
            <person name="Dalin E."/>
            <person name="Tice H."/>
            <person name="Pitluck S."/>
            <person name="Chain P."/>
            <person name="Malfatti S."/>
            <person name="Shin M."/>
            <person name="Vergez L."/>
            <person name="Schmutz J."/>
            <person name="Larimer F."/>
            <person name="Land M."/>
            <person name="Hauser L."/>
            <person name="Kyrpides N."/>
            <person name="Anderson I."/>
            <person name="Sieprawska-Lupa M."/>
            <person name="Whitman W.B."/>
            <person name="Richardson P."/>
        </authorList>
    </citation>
    <scope>NUCLEOTIDE SEQUENCE [LARGE SCALE GENOMIC DNA]</scope>
    <source>
        <strain>ATCC 35089 / DSM 1224 / JCM 13029 / OCM 148 / SB</strain>
    </source>
</reference>
<protein>
    <recommendedName>
        <fullName evidence="1">Diphthine synthase</fullName>
        <ecNumber evidence="1">2.1.1.98</ecNumber>
    </recommendedName>
    <alternativeName>
        <fullName evidence="1">Diphthamide biosynthesis methyltransferase</fullName>
    </alternativeName>
</protein>
<proteinExistence type="inferred from homology"/>
<feature type="chain" id="PRO_1000064826" description="Diphthine synthase">
    <location>
        <begin position="1"/>
        <end position="255"/>
    </location>
</feature>
<feature type="binding site" evidence="1">
    <location>
        <position position="9"/>
    </location>
    <ligand>
        <name>S-adenosyl-L-methionine</name>
        <dbReference type="ChEBI" id="CHEBI:59789"/>
    </ligand>
</feature>
<feature type="binding site" evidence="1">
    <location>
        <position position="85"/>
    </location>
    <ligand>
        <name>S-adenosyl-L-methionine</name>
        <dbReference type="ChEBI" id="CHEBI:59789"/>
    </ligand>
</feature>
<feature type="binding site" evidence="1">
    <location>
        <position position="88"/>
    </location>
    <ligand>
        <name>S-adenosyl-L-methionine</name>
        <dbReference type="ChEBI" id="CHEBI:59789"/>
    </ligand>
</feature>
<feature type="binding site" evidence="1">
    <location>
        <begin position="113"/>
        <end position="114"/>
    </location>
    <ligand>
        <name>S-adenosyl-L-methionine</name>
        <dbReference type="ChEBI" id="CHEBI:59789"/>
    </ligand>
</feature>
<feature type="binding site" evidence="1">
    <location>
        <position position="164"/>
    </location>
    <ligand>
        <name>S-adenosyl-L-methionine</name>
        <dbReference type="ChEBI" id="CHEBI:59789"/>
    </ligand>
</feature>
<feature type="binding site" evidence="1">
    <location>
        <position position="207"/>
    </location>
    <ligand>
        <name>S-adenosyl-L-methionine</name>
        <dbReference type="ChEBI" id="CHEBI:59789"/>
    </ligand>
</feature>
<feature type="binding site" evidence="1">
    <location>
        <position position="232"/>
    </location>
    <ligand>
        <name>S-adenosyl-L-methionine</name>
        <dbReference type="ChEBI" id="CHEBI:59789"/>
    </ligand>
</feature>
<dbReference type="EC" id="2.1.1.98" evidence="1"/>
<dbReference type="EMBL" id="CP000742">
    <property type="protein sequence ID" value="ABR55353.1"/>
    <property type="molecule type" value="Genomic_DNA"/>
</dbReference>
<dbReference type="RefSeq" id="WP_012066267.1">
    <property type="nucleotide sequence ID" value="NC_009634.1"/>
</dbReference>
<dbReference type="SMR" id="A6US81"/>
<dbReference type="STRING" id="406327.Mevan_1459"/>
<dbReference type="GeneID" id="5324819"/>
<dbReference type="KEGG" id="mvn:Mevan_1459"/>
<dbReference type="eggNOG" id="arCOG04161">
    <property type="taxonomic scope" value="Archaea"/>
</dbReference>
<dbReference type="HOGENOM" id="CLU_066040_1_0_2"/>
<dbReference type="OrthoDB" id="39139at2157"/>
<dbReference type="UniPathway" id="UPA00559"/>
<dbReference type="Proteomes" id="UP000001107">
    <property type="component" value="Chromosome"/>
</dbReference>
<dbReference type="GO" id="GO:0004164">
    <property type="term" value="F:diphthine synthase activity"/>
    <property type="evidence" value="ECO:0007669"/>
    <property type="project" value="UniProtKB-UniRule"/>
</dbReference>
<dbReference type="GO" id="GO:0032259">
    <property type="term" value="P:methylation"/>
    <property type="evidence" value="ECO:0007669"/>
    <property type="project" value="UniProtKB-KW"/>
</dbReference>
<dbReference type="GO" id="GO:0017183">
    <property type="term" value="P:protein histidyl modification to diphthamide"/>
    <property type="evidence" value="ECO:0007669"/>
    <property type="project" value="UniProtKB-UniRule"/>
</dbReference>
<dbReference type="CDD" id="cd11647">
    <property type="entry name" value="DHP5_DphB"/>
    <property type="match status" value="1"/>
</dbReference>
<dbReference type="Gene3D" id="3.40.1010.10">
    <property type="entry name" value="Cobalt-precorrin-4 Transmethylase, Domain 1"/>
    <property type="match status" value="1"/>
</dbReference>
<dbReference type="Gene3D" id="3.30.950.10">
    <property type="entry name" value="Methyltransferase, Cobalt-precorrin-4 Transmethylase, Domain 2"/>
    <property type="match status" value="1"/>
</dbReference>
<dbReference type="HAMAP" id="MF_01084">
    <property type="entry name" value="Diphthine_synth"/>
    <property type="match status" value="1"/>
</dbReference>
<dbReference type="InterPro" id="IPR000878">
    <property type="entry name" value="4pyrrol_Mease"/>
</dbReference>
<dbReference type="InterPro" id="IPR035996">
    <property type="entry name" value="4pyrrol_Methylase_sf"/>
</dbReference>
<dbReference type="InterPro" id="IPR014777">
    <property type="entry name" value="4pyrrole_Mease_sub1"/>
</dbReference>
<dbReference type="InterPro" id="IPR014776">
    <property type="entry name" value="4pyrrole_Mease_sub2"/>
</dbReference>
<dbReference type="InterPro" id="IPR004551">
    <property type="entry name" value="Dphthn_synthase"/>
</dbReference>
<dbReference type="NCBIfam" id="TIGR00522">
    <property type="entry name" value="dph5"/>
    <property type="match status" value="1"/>
</dbReference>
<dbReference type="PANTHER" id="PTHR10882:SF0">
    <property type="entry name" value="DIPHTHINE METHYL ESTER SYNTHASE"/>
    <property type="match status" value="1"/>
</dbReference>
<dbReference type="PANTHER" id="PTHR10882">
    <property type="entry name" value="DIPHTHINE SYNTHASE"/>
    <property type="match status" value="1"/>
</dbReference>
<dbReference type="Pfam" id="PF00590">
    <property type="entry name" value="TP_methylase"/>
    <property type="match status" value="1"/>
</dbReference>
<dbReference type="PIRSF" id="PIRSF036432">
    <property type="entry name" value="Diphthine_synth"/>
    <property type="match status" value="1"/>
</dbReference>
<dbReference type="SUPFAM" id="SSF53790">
    <property type="entry name" value="Tetrapyrrole methylase"/>
    <property type="match status" value="1"/>
</dbReference>
<comment type="function">
    <text evidence="1">S-adenosyl-L-methionine-dependent methyltransferase that catalyzes the trimethylation of the amino group of the modified target histidine residue in translation elongation factor 2 (EF-2), to form an intermediate called diphthine. The three successive methylation reactions represent the second step of diphthamide biosynthesis.</text>
</comment>
<comment type="catalytic activity">
    <reaction evidence="1">
        <text>2-[(3S)-amino-3-carboxypropyl]-L-histidyl-[translation elongation factor 2] + 3 S-adenosyl-L-methionine = diphthine-[translation elongation factor 2] + 3 S-adenosyl-L-homocysteine + 3 H(+)</text>
        <dbReference type="Rhea" id="RHEA:36415"/>
        <dbReference type="Rhea" id="RHEA-COMP:9749"/>
        <dbReference type="Rhea" id="RHEA-COMP:10172"/>
        <dbReference type="ChEBI" id="CHEBI:15378"/>
        <dbReference type="ChEBI" id="CHEBI:57856"/>
        <dbReference type="ChEBI" id="CHEBI:59789"/>
        <dbReference type="ChEBI" id="CHEBI:73995"/>
        <dbReference type="ChEBI" id="CHEBI:82696"/>
        <dbReference type="EC" id="2.1.1.98"/>
    </reaction>
</comment>
<comment type="pathway">
    <text evidence="1">Protein modification; peptidyl-diphthamide biosynthesis.</text>
</comment>
<comment type="subunit">
    <text evidence="1">Homodimer.</text>
</comment>
<comment type="similarity">
    <text evidence="1">Belongs to the diphthine synthase family.</text>
</comment>
<accession>A6US81</accession>
<organism>
    <name type="scientific">Methanococcus vannielii (strain ATCC 35089 / DSM 1224 / JCM 13029 / OCM 148 / SB)</name>
    <dbReference type="NCBI Taxonomy" id="406327"/>
    <lineage>
        <taxon>Archaea</taxon>
        <taxon>Methanobacteriati</taxon>
        <taxon>Methanobacteriota</taxon>
        <taxon>Methanomada group</taxon>
        <taxon>Methanococci</taxon>
        <taxon>Methanococcales</taxon>
        <taxon>Methanococcaceae</taxon>
        <taxon>Methanococcus</taxon>
    </lineage>
</organism>
<gene>
    <name evidence="1" type="primary">dphB</name>
    <name type="ordered locus">Mevan_1459</name>
</gene>
<name>DPHB_METVS</name>
<keyword id="KW-0489">Methyltransferase</keyword>
<keyword id="KW-0949">S-adenosyl-L-methionine</keyword>
<keyword id="KW-0808">Transferase</keyword>
<sequence>MLVMAGLGLYDELDVTLKTVEFAKKVDKIYAEFYTAILTGTTIEKIEKTLQKEITVLNREKVEYETNKLIEEAKEKDIMFLTAGDPMVATTHVDIAVEARKKGIEVIILNAPSIYSAIGITGLQLYKFGKTTSIVFPEPNYFPETPYDVIKDNLSLGYHTLCLLDIQTDKQKFMTANEGLSVLLEIEEKRKEKIIDENTKVLVVARAGSIKPGLFYGKIKDLIKHDFGTPLHCVIILGKLHFMETDALKYLFENI</sequence>
<evidence type="ECO:0000255" key="1">
    <source>
        <dbReference type="HAMAP-Rule" id="MF_01084"/>
    </source>
</evidence>